<name>LIPA1_BRADU</name>
<evidence type="ECO:0000255" key="1">
    <source>
        <dbReference type="HAMAP-Rule" id="MF_00206"/>
    </source>
</evidence>
<evidence type="ECO:0000255" key="2">
    <source>
        <dbReference type="PROSITE-ProRule" id="PRU01266"/>
    </source>
</evidence>
<evidence type="ECO:0000256" key="3">
    <source>
        <dbReference type="SAM" id="MobiDB-lite"/>
    </source>
</evidence>
<feature type="chain" id="PRO_0000102293" description="Lipoyl synthase 1">
    <location>
        <begin position="1"/>
        <end position="318"/>
    </location>
</feature>
<feature type="domain" description="Radical SAM core" evidence="2">
    <location>
        <begin position="72"/>
        <end position="288"/>
    </location>
</feature>
<feature type="region of interest" description="Disordered" evidence="3">
    <location>
        <begin position="6"/>
        <end position="32"/>
    </location>
</feature>
<feature type="binding site" evidence="1">
    <location>
        <position position="60"/>
    </location>
    <ligand>
        <name>[4Fe-4S] cluster</name>
        <dbReference type="ChEBI" id="CHEBI:49883"/>
        <label>1</label>
    </ligand>
</feature>
<feature type="binding site" evidence="1">
    <location>
        <position position="65"/>
    </location>
    <ligand>
        <name>[4Fe-4S] cluster</name>
        <dbReference type="ChEBI" id="CHEBI:49883"/>
        <label>1</label>
    </ligand>
</feature>
<feature type="binding site" evidence="1">
    <location>
        <position position="71"/>
    </location>
    <ligand>
        <name>[4Fe-4S] cluster</name>
        <dbReference type="ChEBI" id="CHEBI:49883"/>
        <label>1</label>
    </ligand>
</feature>
<feature type="binding site" evidence="1">
    <location>
        <position position="86"/>
    </location>
    <ligand>
        <name>[4Fe-4S] cluster</name>
        <dbReference type="ChEBI" id="CHEBI:49883"/>
        <label>2</label>
        <note>4Fe-4S-S-AdoMet</note>
    </ligand>
</feature>
<feature type="binding site" evidence="1">
    <location>
        <position position="90"/>
    </location>
    <ligand>
        <name>[4Fe-4S] cluster</name>
        <dbReference type="ChEBI" id="CHEBI:49883"/>
        <label>2</label>
        <note>4Fe-4S-S-AdoMet</note>
    </ligand>
</feature>
<feature type="binding site" evidence="1">
    <location>
        <position position="93"/>
    </location>
    <ligand>
        <name>[4Fe-4S] cluster</name>
        <dbReference type="ChEBI" id="CHEBI:49883"/>
        <label>2</label>
        <note>4Fe-4S-S-AdoMet</note>
    </ligand>
</feature>
<feature type="binding site" evidence="1">
    <location>
        <position position="299"/>
    </location>
    <ligand>
        <name>[4Fe-4S] cluster</name>
        <dbReference type="ChEBI" id="CHEBI:49883"/>
        <label>1</label>
    </ligand>
</feature>
<reference key="1">
    <citation type="journal article" date="2002" name="DNA Res.">
        <title>Complete genomic sequence of nitrogen-fixing symbiotic bacterium Bradyrhizobium japonicum USDA110.</title>
        <authorList>
            <person name="Kaneko T."/>
            <person name="Nakamura Y."/>
            <person name="Sato S."/>
            <person name="Minamisawa K."/>
            <person name="Uchiumi T."/>
            <person name="Sasamoto S."/>
            <person name="Watanabe A."/>
            <person name="Idesawa K."/>
            <person name="Iriguchi M."/>
            <person name="Kawashima K."/>
            <person name="Kohara M."/>
            <person name="Matsumoto M."/>
            <person name="Shimpo S."/>
            <person name="Tsuruoka H."/>
            <person name="Wada T."/>
            <person name="Yamada M."/>
            <person name="Tabata S."/>
        </authorList>
    </citation>
    <scope>NUCLEOTIDE SEQUENCE [LARGE SCALE GENOMIC DNA]</scope>
    <source>
        <strain>JCM 10833 / BCRC 13528 / IAM 13628 / NBRC 14792 / USDA 110</strain>
    </source>
</reference>
<organism>
    <name type="scientific">Bradyrhizobium diazoefficiens (strain JCM 10833 / BCRC 13528 / IAM 13628 / NBRC 14792 / USDA 110)</name>
    <dbReference type="NCBI Taxonomy" id="224911"/>
    <lineage>
        <taxon>Bacteria</taxon>
        <taxon>Pseudomonadati</taxon>
        <taxon>Pseudomonadota</taxon>
        <taxon>Alphaproteobacteria</taxon>
        <taxon>Hyphomicrobiales</taxon>
        <taxon>Nitrobacteraceae</taxon>
        <taxon>Bradyrhizobium</taxon>
    </lineage>
</organism>
<accession>Q89LR6</accession>
<gene>
    <name evidence="1" type="primary">lipA1</name>
    <name type="synonym">lipA</name>
    <name type="ordered locus">blr4477</name>
</gene>
<dbReference type="EC" id="2.8.1.8" evidence="1"/>
<dbReference type="EMBL" id="BA000040">
    <property type="protein sequence ID" value="BAC49742.1"/>
    <property type="molecule type" value="Genomic_DNA"/>
</dbReference>
<dbReference type="RefSeq" id="NP_771117.1">
    <property type="nucleotide sequence ID" value="NC_004463.1"/>
</dbReference>
<dbReference type="RefSeq" id="WP_011087249.1">
    <property type="nucleotide sequence ID" value="NC_004463.1"/>
</dbReference>
<dbReference type="SMR" id="Q89LR6"/>
<dbReference type="FunCoup" id="Q89LR6">
    <property type="interactions" value="715"/>
</dbReference>
<dbReference type="STRING" id="224911.AAV28_19550"/>
<dbReference type="EnsemblBacteria" id="BAC49742">
    <property type="protein sequence ID" value="BAC49742"/>
    <property type="gene ID" value="BAC49742"/>
</dbReference>
<dbReference type="GeneID" id="46491483"/>
<dbReference type="KEGG" id="bja:blr4477"/>
<dbReference type="PATRIC" id="fig|224911.44.peg.4250"/>
<dbReference type="eggNOG" id="COG0320">
    <property type="taxonomic scope" value="Bacteria"/>
</dbReference>
<dbReference type="HOGENOM" id="CLU_033144_2_1_5"/>
<dbReference type="InParanoid" id="Q89LR6"/>
<dbReference type="OrthoDB" id="9787898at2"/>
<dbReference type="PhylomeDB" id="Q89LR6"/>
<dbReference type="UniPathway" id="UPA00538">
    <property type="reaction ID" value="UER00593"/>
</dbReference>
<dbReference type="Proteomes" id="UP000002526">
    <property type="component" value="Chromosome"/>
</dbReference>
<dbReference type="GO" id="GO:0005737">
    <property type="term" value="C:cytoplasm"/>
    <property type="evidence" value="ECO:0007669"/>
    <property type="project" value="UniProtKB-SubCell"/>
</dbReference>
<dbReference type="GO" id="GO:0051539">
    <property type="term" value="F:4 iron, 4 sulfur cluster binding"/>
    <property type="evidence" value="ECO:0007669"/>
    <property type="project" value="UniProtKB-UniRule"/>
</dbReference>
<dbReference type="GO" id="GO:0016992">
    <property type="term" value="F:lipoate synthase activity"/>
    <property type="evidence" value="ECO:0007669"/>
    <property type="project" value="UniProtKB-UniRule"/>
</dbReference>
<dbReference type="GO" id="GO:0046872">
    <property type="term" value="F:metal ion binding"/>
    <property type="evidence" value="ECO:0007669"/>
    <property type="project" value="UniProtKB-KW"/>
</dbReference>
<dbReference type="CDD" id="cd01335">
    <property type="entry name" value="Radical_SAM"/>
    <property type="match status" value="1"/>
</dbReference>
<dbReference type="FunFam" id="3.20.20.70:FF:000186">
    <property type="entry name" value="Lipoyl synthase"/>
    <property type="match status" value="1"/>
</dbReference>
<dbReference type="Gene3D" id="3.20.20.70">
    <property type="entry name" value="Aldolase class I"/>
    <property type="match status" value="1"/>
</dbReference>
<dbReference type="HAMAP" id="MF_00206">
    <property type="entry name" value="Lipoyl_synth"/>
    <property type="match status" value="1"/>
</dbReference>
<dbReference type="InterPro" id="IPR013785">
    <property type="entry name" value="Aldolase_TIM"/>
</dbReference>
<dbReference type="InterPro" id="IPR006638">
    <property type="entry name" value="Elp3/MiaA/NifB-like_rSAM"/>
</dbReference>
<dbReference type="InterPro" id="IPR003698">
    <property type="entry name" value="Lipoyl_synth"/>
</dbReference>
<dbReference type="InterPro" id="IPR007197">
    <property type="entry name" value="rSAM"/>
</dbReference>
<dbReference type="NCBIfam" id="TIGR00510">
    <property type="entry name" value="lipA"/>
    <property type="match status" value="1"/>
</dbReference>
<dbReference type="NCBIfam" id="NF004019">
    <property type="entry name" value="PRK05481.1"/>
    <property type="match status" value="1"/>
</dbReference>
<dbReference type="NCBIfam" id="NF009544">
    <property type="entry name" value="PRK12928.1"/>
    <property type="match status" value="1"/>
</dbReference>
<dbReference type="PANTHER" id="PTHR10949">
    <property type="entry name" value="LIPOYL SYNTHASE"/>
    <property type="match status" value="1"/>
</dbReference>
<dbReference type="PANTHER" id="PTHR10949:SF0">
    <property type="entry name" value="LIPOYL SYNTHASE, MITOCHONDRIAL"/>
    <property type="match status" value="1"/>
</dbReference>
<dbReference type="Pfam" id="PF04055">
    <property type="entry name" value="Radical_SAM"/>
    <property type="match status" value="1"/>
</dbReference>
<dbReference type="PIRSF" id="PIRSF005963">
    <property type="entry name" value="Lipoyl_synth"/>
    <property type="match status" value="1"/>
</dbReference>
<dbReference type="SFLD" id="SFLDF00271">
    <property type="entry name" value="lipoyl_synthase"/>
    <property type="match status" value="1"/>
</dbReference>
<dbReference type="SFLD" id="SFLDS00029">
    <property type="entry name" value="Radical_SAM"/>
    <property type="match status" value="1"/>
</dbReference>
<dbReference type="SMART" id="SM00729">
    <property type="entry name" value="Elp3"/>
    <property type="match status" value="1"/>
</dbReference>
<dbReference type="SUPFAM" id="SSF102114">
    <property type="entry name" value="Radical SAM enzymes"/>
    <property type="match status" value="1"/>
</dbReference>
<dbReference type="PROSITE" id="PS51918">
    <property type="entry name" value="RADICAL_SAM"/>
    <property type="match status" value="1"/>
</dbReference>
<protein>
    <recommendedName>
        <fullName evidence="1">Lipoyl synthase 1</fullName>
        <ecNumber evidence="1">2.8.1.8</ecNumber>
    </recommendedName>
    <alternativeName>
        <fullName evidence="1">Lip-syn 1</fullName>
        <shortName evidence="1">LS 1</shortName>
    </alternativeName>
    <alternativeName>
        <fullName evidence="1">Lipoate synthase 1</fullName>
    </alternativeName>
    <alternativeName>
        <fullName evidence="1">Lipoic acid synthase 1</fullName>
    </alternativeName>
    <alternativeName>
        <fullName evidence="1">Sulfur insertion protein LipA 1</fullName>
    </alternativeName>
</protein>
<sequence>MVVIVDTISNPLRPRHPEKVNRPDSASPPKPDWIRVRAPNTRGYADTRNIVRANGLHTVCEEAGCPNIGECWDKKHATFMIMGDTCTRACAFCNVKTGLPNALDADEPQNVAEAVAKLGLAHVVITSVDRDDLADGGAEHFAQTIRAIRAACPSTTIEILTPDFLRKEGALEVVVAARPDVFNHNLETVPSRYLTVRPGARYFHSIRLLQRVKELDASIFTKSGIMVGLGEERHEVQQVMDDLRSADVDFLTIGQYLQPTRKHHAVMRYVPPDEFSSYEKVAYTKGFLMVSASPLTRSSHHAGEDFARLKAARAAHAR</sequence>
<proteinExistence type="inferred from homology"/>
<keyword id="KW-0004">4Fe-4S</keyword>
<keyword id="KW-0963">Cytoplasm</keyword>
<keyword id="KW-0408">Iron</keyword>
<keyword id="KW-0411">Iron-sulfur</keyword>
<keyword id="KW-0479">Metal-binding</keyword>
<keyword id="KW-1185">Reference proteome</keyword>
<keyword id="KW-0949">S-adenosyl-L-methionine</keyword>
<keyword id="KW-0808">Transferase</keyword>
<comment type="function">
    <text evidence="1">Catalyzes the radical-mediated insertion of two sulfur atoms into the C-6 and C-8 positions of the octanoyl moiety bound to the lipoyl domains of lipoate-dependent enzymes, thereby converting the octanoylated domains into lipoylated derivatives.</text>
</comment>
<comment type="catalytic activity">
    <reaction evidence="1">
        <text>[[Fe-S] cluster scaffold protein carrying a second [4Fe-4S](2+) cluster] + N(6)-octanoyl-L-lysyl-[protein] + 2 oxidized [2Fe-2S]-[ferredoxin] + 2 S-adenosyl-L-methionine + 4 H(+) = [[Fe-S] cluster scaffold protein] + N(6)-[(R)-dihydrolipoyl]-L-lysyl-[protein] + 4 Fe(3+) + 2 hydrogen sulfide + 2 5'-deoxyadenosine + 2 L-methionine + 2 reduced [2Fe-2S]-[ferredoxin]</text>
        <dbReference type="Rhea" id="RHEA:16585"/>
        <dbReference type="Rhea" id="RHEA-COMP:9928"/>
        <dbReference type="Rhea" id="RHEA-COMP:10000"/>
        <dbReference type="Rhea" id="RHEA-COMP:10001"/>
        <dbReference type="Rhea" id="RHEA-COMP:10475"/>
        <dbReference type="Rhea" id="RHEA-COMP:14568"/>
        <dbReference type="Rhea" id="RHEA-COMP:14569"/>
        <dbReference type="ChEBI" id="CHEBI:15378"/>
        <dbReference type="ChEBI" id="CHEBI:17319"/>
        <dbReference type="ChEBI" id="CHEBI:29034"/>
        <dbReference type="ChEBI" id="CHEBI:29919"/>
        <dbReference type="ChEBI" id="CHEBI:33722"/>
        <dbReference type="ChEBI" id="CHEBI:33737"/>
        <dbReference type="ChEBI" id="CHEBI:33738"/>
        <dbReference type="ChEBI" id="CHEBI:57844"/>
        <dbReference type="ChEBI" id="CHEBI:59789"/>
        <dbReference type="ChEBI" id="CHEBI:78809"/>
        <dbReference type="ChEBI" id="CHEBI:83100"/>
        <dbReference type="EC" id="2.8.1.8"/>
    </reaction>
</comment>
<comment type="cofactor">
    <cofactor evidence="1">
        <name>[4Fe-4S] cluster</name>
        <dbReference type="ChEBI" id="CHEBI:49883"/>
    </cofactor>
    <text evidence="1">Binds 2 [4Fe-4S] clusters per subunit. One cluster is coordinated with 3 cysteines and an exchangeable S-adenosyl-L-methionine.</text>
</comment>
<comment type="pathway">
    <text evidence="1">Protein modification; protein lipoylation via endogenous pathway; protein N(6)-(lipoyl)lysine from octanoyl-[acyl-carrier-protein]: step 2/2.</text>
</comment>
<comment type="subcellular location">
    <subcellularLocation>
        <location evidence="1">Cytoplasm</location>
    </subcellularLocation>
</comment>
<comment type="similarity">
    <text evidence="1">Belongs to the radical SAM superfamily. Lipoyl synthase family.</text>
</comment>